<accession>Q7W9M4</accession>
<protein>
    <recommendedName>
        <fullName evidence="1">Leucine--tRNA ligase</fullName>
        <ecNumber evidence="1">6.1.1.4</ecNumber>
    </recommendedName>
    <alternativeName>
        <fullName evidence="1">Leucyl-tRNA synthetase</fullName>
        <shortName evidence="1">LeuRS</shortName>
    </alternativeName>
</protein>
<dbReference type="EC" id="6.1.1.4" evidence="1"/>
<dbReference type="EMBL" id="BX640428">
    <property type="protein sequence ID" value="CAE37032.1"/>
    <property type="molecule type" value="Genomic_DNA"/>
</dbReference>
<dbReference type="RefSeq" id="WP_010928174.1">
    <property type="nucleotide sequence ID" value="NC_002928.3"/>
</dbReference>
<dbReference type="SMR" id="Q7W9M4"/>
<dbReference type="GeneID" id="93203495"/>
<dbReference type="KEGG" id="bpa:BPP1731"/>
<dbReference type="HOGENOM" id="CLU_004427_0_0_4"/>
<dbReference type="Proteomes" id="UP000001421">
    <property type="component" value="Chromosome"/>
</dbReference>
<dbReference type="GO" id="GO:0005829">
    <property type="term" value="C:cytosol"/>
    <property type="evidence" value="ECO:0007669"/>
    <property type="project" value="TreeGrafter"/>
</dbReference>
<dbReference type="GO" id="GO:0002161">
    <property type="term" value="F:aminoacyl-tRNA deacylase activity"/>
    <property type="evidence" value="ECO:0007669"/>
    <property type="project" value="InterPro"/>
</dbReference>
<dbReference type="GO" id="GO:0005524">
    <property type="term" value="F:ATP binding"/>
    <property type="evidence" value="ECO:0007669"/>
    <property type="project" value="UniProtKB-UniRule"/>
</dbReference>
<dbReference type="GO" id="GO:0004823">
    <property type="term" value="F:leucine-tRNA ligase activity"/>
    <property type="evidence" value="ECO:0007669"/>
    <property type="project" value="UniProtKB-UniRule"/>
</dbReference>
<dbReference type="GO" id="GO:0006429">
    <property type="term" value="P:leucyl-tRNA aminoacylation"/>
    <property type="evidence" value="ECO:0007669"/>
    <property type="project" value="UniProtKB-UniRule"/>
</dbReference>
<dbReference type="CDD" id="cd07958">
    <property type="entry name" value="Anticodon_Ia_Leu_BEm"/>
    <property type="match status" value="1"/>
</dbReference>
<dbReference type="CDD" id="cd00812">
    <property type="entry name" value="LeuRS_core"/>
    <property type="match status" value="1"/>
</dbReference>
<dbReference type="FunFam" id="1.10.730.10:FF:000002">
    <property type="entry name" value="Leucine--tRNA ligase"/>
    <property type="match status" value="1"/>
</dbReference>
<dbReference type="FunFam" id="3.10.20.590:FF:000001">
    <property type="entry name" value="Leucine--tRNA ligase"/>
    <property type="match status" value="1"/>
</dbReference>
<dbReference type="FunFam" id="3.40.50.620:FF:000003">
    <property type="entry name" value="Leucine--tRNA ligase"/>
    <property type="match status" value="1"/>
</dbReference>
<dbReference type="FunFam" id="3.40.50.620:FF:000056">
    <property type="entry name" value="Leucine--tRNA ligase"/>
    <property type="match status" value="1"/>
</dbReference>
<dbReference type="FunFam" id="3.90.740.10:FF:000012">
    <property type="entry name" value="Leucine--tRNA ligase"/>
    <property type="match status" value="1"/>
</dbReference>
<dbReference type="Gene3D" id="2.20.28.290">
    <property type="match status" value="1"/>
</dbReference>
<dbReference type="Gene3D" id="3.10.20.590">
    <property type="match status" value="1"/>
</dbReference>
<dbReference type="Gene3D" id="3.40.50.620">
    <property type="entry name" value="HUPs"/>
    <property type="match status" value="2"/>
</dbReference>
<dbReference type="Gene3D" id="1.10.730.10">
    <property type="entry name" value="Isoleucyl-tRNA Synthetase, Domain 1"/>
    <property type="match status" value="2"/>
</dbReference>
<dbReference type="HAMAP" id="MF_00049_B">
    <property type="entry name" value="Leu_tRNA_synth_B"/>
    <property type="match status" value="1"/>
</dbReference>
<dbReference type="InterPro" id="IPR001412">
    <property type="entry name" value="aa-tRNA-synth_I_CS"/>
</dbReference>
<dbReference type="InterPro" id="IPR002300">
    <property type="entry name" value="aa-tRNA-synth_Ia"/>
</dbReference>
<dbReference type="InterPro" id="IPR002302">
    <property type="entry name" value="Leu-tRNA-ligase"/>
</dbReference>
<dbReference type="InterPro" id="IPR025709">
    <property type="entry name" value="Leu_tRNA-synth_edit"/>
</dbReference>
<dbReference type="InterPro" id="IPR013155">
    <property type="entry name" value="M/V/L/I-tRNA-synth_anticd-bd"/>
</dbReference>
<dbReference type="InterPro" id="IPR015413">
    <property type="entry name" value="Methionyl/Leucyl_tRNA_Synth"/>
</dbReference>
<dbReference type="InterPro" id="IPR014729">
    <property type="entry name" value="Rossmann-like_a/b/a_fold"/>
</dbReference>
<dbReference type="InterPro" id="IPR009080">
    <property type="entry name" value="tRNAsynth_Ia_anticodon-bd"/>
</dbReference>
<dbReference type="InterPro" id="IPR009008">
    <property type="entry name" value="Val/Leu/Ile-tRNA-synth_edit"/>
</dbReference>
<dbReference type="NCBIfam" id="TIGR00396">
    <property type="entry name" value="leuS_bact"/>
    <property type="match status" value="1"/>
</dbReference>
<dbReference type="PANTHER" id="PTHR43740:SF2">
    <property type="entry name" value="LEUCINE--TRNA LIGASE, MITOCHONDRIAL"/>
    <property type="match status" value="1"/>
</dbReference>
<dbReference type="PANTHER" id="PTHR43740">
    <property type="entry name" value="LEUCYL-TRNA SYNTHETASE"/>
    <property type="match status" value="1"/>
</dbReference>
<dbReference type="Pfam" id="PF08264">
    <property type="entry name" value="Anticodon_1"/>
    <property type="match status" value="1"/>
</dbReference>
<dbReference type="Pfam" id="PF00133">
    <property type="entry name" value="tRNA-synt_1"/>
    <property type="match status" value="1"/>
</dbReference>
<dbReference type="Pfam" id="PF13603">
    <property type="entry name" value="tRNA-synt_1_2"/>
    <property type="match status" value="1"/>
</dbReference>
<dbReference type="Pfam" id="PF09334">
    <property type="entry name" value="tRNA-synt_1g"/>
    <property type="match status" value="1"/>
</dbReference>
<dbReference type="PRINTS" id="PR00985">
    <property type="entry name" value="TRNASYNTHLEU"/>
</dbReference>
<dbReference type="SUPFAM" id="SSF47323">
    <property type="entry name" value="Anticodon-binding domain of a subclass of class I aminoacyl-tRNA synthetases"/>
    <property type="match status" value="1"/>
</dbReference>
<dbReference type="SUPFAM" id="SSF52374">
    <property type="entry name" value="Nucleotidylyl transferase"/>
    <property type="match status" value="1"/>
</dbReference>
<dbReference type="SUPFAM" id="SSF50677">
    <property type="entry name" value="ValRS/IleRS/LeuRS editing domain"/>
    <property type="match status" value="1"/>
</dbReference>
<dbReference type="PROSITE" id="PS00178">
    <property type="entry name" value="AA_TRNA_LIGASE_I"/>
    <property type="match status" value="1"/>
</dbReference>
<gene>
    <name evidence="1" type="primary">leuS</name>
    <name type="ordered locus">BPP1731</name>
</gene>
<proteinExistence type="inferred from homology"/>
<organism>
    <name type="scientific">Bordetella parapertussis (strain 12822 / ATCC BAA-587 / NCTC 13253)</name>
    <dbReference type="NCBI Taxonomy" id="257311"/>
    <lineage>
        <taxon>Bacteria</taxon>
        <taxon>Pseudomonadati</taxon>
        <taxon>Pseudomonadota</taxon>
        <taxon>Betaproteobacteria</taxon>
        <taxon>Burkholderiales</taxon>
        <taxon>Alcaligenaceae</taxon>
        <taxon>Bordetella</taxon>
    </lineage>
</organism>
<sequence length="885" mass="99038">MQERYQPNSVEAAAQQTWQARDAYLVHEHAKNPDGSEKPKFYACSMLPYPSGKLHMGHVRNYTINDMMARQLRMRGYNVLMPMGWDAFGMPAENAAIKSKVPPAKWTYDNIAYMKKQMKAMGLAIDWSREMCACDPKYYKWNQWLFLKMLEKGIAYRKTQVVNWDPVDQTVLANEQVIDGRGWRSGAPVEKREIPGYYLRITDYAEELLDQVSTNLPGWPERVRLMQENWIGKSEGLRFAFPHRIAGADGKLIQDGKLYVFTTRADTIMGVTFCAVAPEHPLATHAAQSNPALAAFVEQCKLGGTTEAEMATREKEGMPTGLTVTHPLTGAEIDVWVGNYVLMTYGDGAVMGVPAHDERDFAFARKYGLPIRQVVALEGKTYSTDAWQEWYGDKQAGRTVNSGKYDGLAYQAAVDTIAADLAAQGLGEKQTTWRLRDWGISRQRYWGTPIPIIHCADCGPVPVPEQDLPVVLPDDLIPDGSGNPLAKNEAFLSCSCPRCGKPARRETDTMDTFVDSSWYFMRYTSPDNDQAMVDARNDYWMPMDQYIGGIEHAVLHLLYARFWTKVMRDLSLLNFDEPFTKLLCQGMVLNHIYSRKTPQGGIEYFWPEEVDNVYDAKGAIVGAKLQRDGSEVNYGGVGTMSKSKNNGVDPQSLIDTLGADTARLFVMFASPPEQTLEWSDSGVEGANRFLRRLWALGYAQREAVGRGLATGADWAQAPAPVKELRREVYGLLKQADYDYQRIQYNTVVSACMKMLNAIDDAPLPEGPAADAARAETLGLLLRVLYPVVPHITWHLWQDLGYAEHLGDLLDAPWPHVDEAALVADEIELMLQVNGKLRGSIRVAAKAPKEDIERIAAAQEEVARFLEGRPPKRVIVVPGKLVNVVG</sequence>
<reference key="1">
    <citation type="journal article" date="2003" name="Nat. Genet.">
        <title>Comparative analysis of the genome sequences of Bordetella pertussis, Bordetella parapertussis and Bordetella bronchiseptica.</title>
        <authorList>
            <person name="Parkhill J."/>
            <person name="Sebaihia M."/>
            <person name="Preston A."/>
            <person name="Murphy L.D."/>
            <person name="Thomson N.R."/>
            <person name="Harris D.E."/>
            <person name="Holden M.T.G."/>
            <person name="Churcher C.M."/>
            <person name="Bentley S.D."/>
            <person name="Mungall K.L."/>
            <person name="Cerdeno-Tarraga A.-M."/>
            <person name="Temple L."/>
            <person name="James K.D."/>
            <person name="Harris B."/>
            <person name="Quail M.A."/>
            <person name="Achtman M."/>
            <person name="Atkin R."/>
            <person name="Baker S."/>
            <person name="Basham D."/>
            <person name="Bason N."/>
            <person name="Cherevach I."/>
            <person name="Chillingworth T."/>
            <person name="Collins M."/>
            <person name="Cronin A."/>
            <person name="Davis P."/>
            <person name="Doggett J."/>
            <person name="Feltwell T."/>
            <person name="Goble A."/>
            <person name="Hamlin N."/>
            <person name="Hauser H."/>
            <person name="Holroyd S."/>
            <person name="Jagels K."/>
            <person name="Leather S."/>
            <person name="Moule S."/>
            <person name="Norberczak H."/>
            <person name="O'Neil S."/>
            <person name="Ormond D."/>
            <person name="Price C."/>
            <person name="Rabbinowitsch E."/>
            <person name="Rutter S."/>
            <person name="Sanders M."/>
            <person name="Saunders D."/>
            <person name="Seeger K."/>
            <person name="Sharp S."/>
            <person name="Simmonds M."/>
            <person name="Skelton J."/>
            <person name="Squares R."/>
            <person name="Squares S."/>
            <person name="Stevens K."/>
            <person name="Unwin L."/>
            <person name="Whitehead S."/>
            <person name="Barrell B.G."/>
            <person name="Maskell D.J."/>
        </authorList>
    </citation>
    <scope>NUCLEOTIDE SEQUENCE [LARGE SCALE GENOMIC DNA]</scope>
    <source>
        <strain>12822 / ATCC BAA-587 / NCTC 13253</strain>
    </source>
</reference>
<name>SYL_BORPA</name>
<comment type="catalytic activity">
    <reaction evidence="1">
        <text>tRNA(Leu) + L-leucine + ATP = L-leucyl-tRNA(Leu) + AMP + diphosphate</text>
        <dbReference type="Rhea" id="RHEA:11688"/>
        <dbReference type="Rhea" id="RHEA-COMP:9613"/>
        <dbReference type="Rhea" id="RHEA-COMP:9622"/>
        <dbReference type="ChEBI" id="CHEBI:30616"/>
        <dbReference type="ChEBI" id="CHEBI:33019"/>
        <dbReference type="ChEBI" id="CHEBI:57427"/>
        <dbReference type="ChEBI" id="CHEBI:78442"/>
        <dbReference type="ChEBI" id="CHEBI:78494"/>
        <dbReference type="ChEBI" id="CHEBI:456215"/>
        <dbReference type="EC" id="6.1.1.4"/>
    </reaction>
</comment>
<comment type="subcellular location">
    <subcellularLocation>
        <location evidence="1">Cytoplasm</location>
    </subcellularLocation>
</comment>
<comment type="similarity">
    <text evidence="1">Belongs to the class-I aminoacyl-tRNA synthetase family.</text>
</comment>
<evidence type="ECO:0000255" key="1">
    <source>
        <dbReference type="HAMAP-Rule" id="MF_00049"/>
    </source>
</evidence>
<keyword id="KW-0030">Aminoacyl-tRNA synthetase</keyword>
<keyword id="KW-0067">ATP-binding</keyword>
<keyword id="KW-0963">Cytoplasm</keyword>
<keyword id="KW-0436">Ligase</keyword>
<keyword id="KW-0547">Nucleotide-binding</keyword>
<keyword id="KW-0648">Protein biosynthesis</keyword>
<feature type="chain" id="PRO_0000151981" description="Leucine--tRNA ligase">
    <location>
        <begin position="1"/>
        <end position="885"/>
    </location>
</feature>
<feature type="short sequence motif" description="'HIGH' region">
    <location>
        <begin position="48"/>
        <end position="58"/>
    </location>
</feature>
<feature type="short sequence motif" description="'KMSKS' region">
    <location>
        <begin position="639"/>
        <end position="643"/>
    </location>
</feature>
<feature type="binding site" evidence="1">
    <location>
        <position position="642"/>
    </location>
    <ligand>
        <name>ATP</name>
        <dbReference type="ChEBI" id="CHEBI:30616"/>
    </ligand>
</feature>